<keyword id="KW-0007">Acetylation</keyword>
<keyword id="KW-1015">Disulfide bond</keyword>
<keyword id="KW-0249">Electron transport</keyword>
<keyword id="KW-0676">Redox-active center</keyword>
<keyword id="KW-1185">Reference proteome</keyword>
<keyword id="KW-0813">Transport</keyword>
<feature type="initiator methionine" description="Removed" evidence="1">
    <location>
        <position position="1"/>
    </location>
</feature>
<feature type="chain" id="PRO_0000120097" description="Thioredoxin 1">
    <location>
        <begin position="2"/>
        <end position="109"/>
    </location>
</feature>
<feature type="domain" description="Thioredoxin" evidence="2">
    <location>
        <begin position="2"/>
        <end position="109"/>
    </location>
</feature>
<feature type="active site" description="Nucleophile" evidence="1">
    <location>
        <position position="33"/>
    </location>
</feature>
<feature type="active site" description="Nucleophile" evidence="1">
    <location>
        <position position="36"/>
    </location>
</feature>
<feature type="site" description="Deprotonates C-terminal active site Cys" evidence="1">
    <location>
        <position position="27"/>
    </location>
</feature>
<feature type="site" description="Contributes to redox potential value" evidence="1">
    <location>
        <position position="34"/>
    </location>
</feature>
<feature type="site" description="Contributes to redox potential value" evidence="1">
    <location>
        <position position="35"/>
    </location>
</feature>
<feature type="modified residue" description="N6-acetyllysine" evidence="1">
    <location>
        <position position="70"/>
    </location>
</feature>
<feature type="disulfide bond" description="Redox-active" evidence="2">
    <location>
        <begin position="33"/>
        <end position="36"/>
    </location>
</feature>
<organism>
    <name type="scientific">Escherichia coli O6:H1 (strain CFT073 / ATCC 700928 / UPEC)</name>
    <dbReference type="NCBI Taxonomy" id="199310"/>
    <lineage>
        <taxon>Bacteria</taxon>
        <taxon>Pseudomonadati</taxon>
        <taxon>Pseudomonadota</taxon>
        <taxon>Gammaproteobacteria</taxon>
        <taxon>Enterobacterales</taxon>
        <taxon>Enterobacteriaceae</taxon>
        <taxon>Escherichia</taxon>
    </lineage>
</organism>
<dbReference type="EMBL" id="AE014075">
    <property type="protein sequence ID" value="AAN83133.1"/>
    <property type="status" value="ALT_INIT"/>
    <property type="molecule type" value="Genomic_DNA"/>
</dbReference>
<dbReference type="RefSeq" id="WP_001280776.1">
    <property type="nucleotide sequence ID" value="NZ_CP051263.1"/>
</dbReference>
<dbReference type="BMRB" id="P0AA26"/>
<dbReference type="SMR" id="P0AA26"/>
<dbReference type="STRING" id="199310.c4701"/>
<dbReference type="GeneID" id="93778163"/>
<dbReference type="KEGG" id="ecc:c4701"/>
<dbReference type="eggNOG" id="COG3118">
    <property type="taxonomic scope" value="Bacteria"/>
</dbReference>
<dbReference type="HOGENOM" id="CLU_090389_10_2_6"/>
<dbReference type="Proteomes" id="UP000001410">
    <property type="component" value="Chromosome"/>
</dbReference>
<dbReference type="GO" id="GO:0005829">
    <property type="term" value="C:cytosol"/>
    <property type="evidence" value="ECO:0007669"/>
    <property type="project" value="TreeGrafter"/>
</dbReference>
<dbReference type="GO" id="GO:0015035">
    <property type="term" value="F:protein-disulfide reductase activity"/>
    <property type="evidence" value="ECO:0007669"/>
    <property type="project" value="InterPro"/>
</dbReference>
<dbReference type="GO" id="GO:0045454">
    <property type="term" value="P:cell redox homeostasis"/>
    <property type="evidence" value="ECO:0007669"/>
    <property type="project" value="TreeGrafter"/>
</dbReference>
<dbReference type="CDD" id="cd02947">
    <property type="entry name" value="TRX_family"/>
    <property type="match status" value="1"/>
</dbReference>
<dbReference type="FunFam" id="3.40.30.10:FF:000001">
    <property type="entry name" value="Thioredoxin"/>
    <property type="match status" value="1"/>
</dbReference>
<dbReference type="Gene3D" id="3.40.30.10">
    <property type="entry name" value="Glutaredoxin"/>
    <property type="match status" value="1"/>
</dbReference>
<dbReference type="InterPro" id="IPR005746">
    <property type="entry name" value="Thioredoxin"/>
</dbReference>
<dbReference type="InterPro" id="IPR036249">
    <property type="entry name" value="Thioredoxin-like_sf"/>
</dbReference>
<dbReference type="InterPro" id="IPR017937">
    <property type="entry name" value="Thioredoxin_CS"/>
</dbReference>
<dbReference type="InterPro" id="IPR013766">
    <property type="entry name" value="Thioredoxin_domain"/>
</dbReference>
<dbReference type="NCBIfam" id="NF006898">
    <property type="entry name" value="PRK09381.1"/>
    <property type="match status" value="1"/>
</dbReference>
<dbReference type="NCBIfam" id="TIGR01068">
    <property type="entry name" value="thioredoxin"/>
    <property type="match status" value="1"/>
</dbReference>
<dbReference type="PANTHER" id="PTHR45663">
    <property type="entry name" value="GEO12009P1"/>
    <property type="match status" value="1"/>
</dbReference>
<dbReference type="PANTHER" id="PTHR45663:SF11">
    <property type="entry name" value="GEO12009P1"/>
    <property type="match status" value="1"/>
</dbReference>
<dbReference type="Pfam" id="PF00085">
    <property type="entry name" value="Thioredoxin"/>
    <property type="match status" value="1"/>
</dbReference>
<dbReference type="PIRSF" id="PIRSF000077">
    <property type="entry name" value="Thioredoxin"/>
    <property type="match status" value="1"/>
</dbReference>
<dbReference type="PRINTS" id="PR00421">
    <property type="entry name" value="THIOREDOXIN"/>
</dbReference>
<dbReference type="SUPFAM" id="SSF52833">
    <property type="entry name" value="Thioredoxin-like"/>
    <property type="match status" value="1"/>
</dbReference>
<dbReference type="PROSITE" id="PS00194">
    <property type="entry name" value="THIOREDOXIN_1"/>
    <property type="match status" value="1"/>
</dbReference>
<dbReference type="PROSITE" id="PS51352">
    <property type="entry name" value="THIOREDOXIN_2"/>
    <property type="match status" value="1"/>
</dbReference>
<protein>
    <recommendedName>
        <fullName>Thioredoxin 1</fullName>
        <shortName>Trx-1</shortName>
    </recommendedName>
</protein>
<sequence>MSDKIIHLTDDSFDTDVLKADGAILVDFWAEWCGPCKMIAPILDEIADEYQGKLTVAKLNIDQNPGTAPKYGIRGIPTLLLFKNGEVAATKVGALSKGQLKEFLDANLA</sequence>
<accession>P0AA26</accession>
<accession>P00274</accession>
<accession>P76750</accession>
<accession>Q47674</accession>
<accession>Q8XAT2</accession>
<name>THIO_ECOL6</name>
<gene>
    <name type="primary">trxA</name>
    <name type="ordered locus">c4701</name>
</gene>
<evidence type="ECO:0000250" key="1"/>
<evidence type="ECO:0000255" key="2">
    <source>
        <dbReference type="PROSITE-ProRule" id="PRU00691"/>
    </source>
</evidence>
<evidence type="ECO:0000305" key="3"/>
<comment type="function">
    <text evidence="1">Participates in various redox reactions through the reversible oxidation of its active center dithiol to a disulfide and catalyzes dithiol-disulfide exchange reactions.</text>
</comment>
<comment type="subunit">
    <text evidence="1">Monomer.</text>
</comment>
<comment type="similarity">
    <text evidence="3">Belongs to the thioredoxin family.</text>
</comment>
<comment type="sequence caution" evidence="3">
    <conflict type="erroneous initiation">
        <sequence resource="EMBL-CDS" id="AAN83133"/>
    </conflict>
    <text>Extended N-terminus.</text>
</comment>
<proteinExistence type="inferred from homology"/>
<reference key="1">
    <citation type="journal article" date="2002" name="Proc. Natl. Acad. Sci. U.S.A.">
        <title>Extensive mosaic structure revealed by the complete genome sequence of uropathogenic Escherichia coli.</title>
        <authorList>
            <person name="Welch R.A."/>
            <person name="Burland V."/>
            <person name="Plunkett G. III"/>
            <person name="Redford P."/>
            <person name="Roesch P."/>
            <person name="Rasko D."/>
            <person name="Buckles E.L."/>
            <person name="Liou S.-R."/>
            <person name="Boutin A."/>
            <person name="Hackett J."/>
            <person name="Stroud D."/>
            <person name="Mayhew G.F."/>
            <person name="Rose D.J."/>
            <person name="Zhou S."/>
            <person name="Schwartz D.C."/>
            <person name="Perna N.T."/>
            <person name="Mobley H.L.T."/>
            <person name="Donnenberg M.S."/>
            <person name="Blattner F.R."/>
        </authorList>
    </citation>
    <scope>NUCLEOTIDE SEQUENCE [LARGE SCALE GENOMIC DNA]</scope>
    <source>
        <strain>CFT073 / ATCC 700928 / UPEC</strain>
    </source>
</reference>